<keyword id="KW-0025">Alternative splicing</keyword>
<keyword id="KW-1015">Disulfide bond</keyword>
<keyword id="KW-0325">Glycoprotein</keyword>
<keyword id="KW-0378">Hydrolase</keyword>
<keyword id="KW-0393">Immunoglobulin domain</keyword>
<keyword id="KW-0472">Membrane</keyword>
<keyword id="KW-0597">Phosphoprotein</keyword>
<keyword id="KW-0904">Protein phosphatase</keyword>
<keyword id="KW-0675">Receptor</keyword>
<keyword id="KW-1185">Reference proteome</keyword>
<keyword id="KW-0677">Repeat</keyword>
<keyword id="KW-0732">Signal</keyword>
<keyword id="KW-0812">Transmembrane</keyword>
<keyword id="KW-1133">Transmembrane helix</keyword>
<name>PTPRT_MOUSE</name>
<protein>
    <recommendedName>
        <fullName>Receptor-type tyrosine-protein phosphatase T</fullName>
        <shortName>R-PTP-T</shortName>
        <ecNumber>3.1.3.48</ecNumber>
    </recommendedName>
    <alternativeName>
        <fullName>RPTPmam4</fullName>
    </alternativeName>
    <alternativeName>
        <fullName>Receptor-type tyrosine-protein phosphatase rho</fullName>
        <shortName>RPTP-rho</shortName>
        <shortName>mRPTPrho</shortName>
    </alternativeName>
</protein>
<reference key="1">
    <citation type="journal article" date="2001" name="BMC Genomics">
        <title>Genomic organization and alternative splicing of the human and mouse RPTPrho genes.</title>
        <authorList>
            <person name="Besco J.A."/>
            <person name="Frostholm A."/>
            <person name="Popesco M.C."/>
            <person name="Burghes A.H.M."/>
            <person name="Rotter A."/>
        </authorList>
    </citation>
    <scope>NUCLEOTIDE SEQUENCE [MRNA] (ISOFORMS 2 AND 5)</scope>
    <scope>ALTERNATIVE SPLICING</scope>
    <source>
        <strain>C57BL/6J</strain>
    </source>
</reference>
<reference key="2">
    <citation type="journal article" date="2001" name="BMC Genomics">
        <authorList>
            <person name="Besco J.A."/>
            <person name="Frostholm A."/>
            <person name="Popesco M.C."/>
            <person name="Burghes A.H.M."/>
            <person name="Rotter A."/>
        </authorList>
    </citation>
    <scope>ERRATUM OF PUBMED:11423001</scope>
</reference>
<reference key="3">
    <citation type="submission" date="2000-03" db="EMBL/GenBank/DDBJ databases">
        <title>RPTPmam4: a fourth member of the MAM family of receptor protein tyrosine phosphatases expressed in adult brain.</title>
        <authorList>
            <person name="Buchli A.D."/>
            <person name="Zimmermann D.R."/>
            <person name="Pfister F."/>
            <person name="Vaughan L."/>
        </authorList>
    </citation>
    <scope>NUCLEOTIDE SEQUENCE [MRNA] (ISOFORMS 1; 2; 3 AND 4)</scope>
</reference>
<reference key="4">
    <citation type="submission" date="2001-07" db="EMBL/GenBank/DDBJ databases">
        <title>Molecular cloning and functional characterization on mouse receptor-like protein tyrosine phosphatase, mRPTPrho, which mediates cell-cell adhesion of pancreatic beta cells.</title>
        <authorList>
            <person name="Mizuta M."/>
            <person name="Bergman B."/>
            <person name="Miki T."/>
            <person name="Hutton J.C."/>
        </authorList>
    </citation>
    <scope>NUCLEOTIDE SEQUENCE [MRNA] (ISOFORMS 3 AND 4)</scope>
</reference>
<reference key="5">
    <citation type="journal article" date="1998" name="J. Comp. Neurol.">
        <title>Novel receptor protein tyrosine phosphatase (RPTPrho) and acidic fibroblast growth factor (FGF-1) transcripts delineate a rostrocaudal boundary in the granule cell layer of the murine cerebellar cortex.</title>
        <authorList>
            <person name="McAndrew P.E."/>
            <person name="Frostholm A."/>
            <person name="Evans J.E."/>
            <person name="Zdilar D."/>
            <person name="Goldowitz D."/>
            <person name="Chiu I.-M."/>
            <person name="Burghes A.H.M."/>
            <person name="Rotter A."/>
        </authorList>
    </citation>
    <scope>TISSUE SPECIFICITY</scope>
</reference>
<reference key="6">
    <citation type="journal article" date="2010" name="Cell">
        <title>A tissue-specific atlas of mouse protein phosphorylation and expression.</title>
        <authorList>
            <person name="Huttlin E.L."/>
            <person name="Jedrychowski M.P."/>
            <person name="Elias J.E."/>
            <person name="Goswami T."/>
            <person name="Rad R."/>
            <person name="Beausoleil S.A."/>
            <person name="Villen J."/>
            <person name="Haas W."/>
            <person name="Sowa M.E."/>
            <person name="Gygi S.P."/>
        </authorList>
    </citation>
    <scope>PHOSPHORYLATION [LARGE SCALE ANALYSIS] AT SER-1221</scope>
    <scope>IDENTIFICATION BY MASS SPECTROMETRY [LARGE SCALE ANALYSIS]</scope>
    <source>
        <tissue>Brain</tissue>
    </source>
</reference>
<dbReference type="EC" id="3.1.3.48"/>
<dbReference type="EMBL" id="AF152556">
    <property type="protein sequence ID" value="AAD34158.4"/>
    <property type="molecule type" value="mRNA"/>
</dbReference>
<dbReference type="EMBL" id="AY026861">
    <property type="protein sequence ID" value="AAK18741.1"/>
    <property type="molecule type" value="mRNA"/>
</dbReference>
<dbReference type="EMBL" id="AY026862">
    <property type="protein sequence ID" value="AAK18742.1"/>
    <property type="molecule type" value="mRNA"/>
</dbReference>
<dbReference type="EMBL" id="AY026863">
    <property type="protein sequence ID" value="AAK18743.1"/>
    <property type="molecule type" value="mRNA"/>
</dbReference>
<dbReference type="EMBL" id="AF244125">
    <property type="protein sequence ID" value="AAF44712.1"/>
    <property type="molecule type" value="mRNA"/>
</dbReference>
<dbReference type="EMBL" id="AF162856">
    <property type="protein sequence ID" value="AAF82400.2"/>
    <property type="molecule type" value="mRNA"/>
</dbReference>
<dbReference type="EMBL" id="AF162857">
    <property type="protein sequence ID" value="AAF82401.1"/>
    <property type="molecule type" value="mRNA"/>
</dbReference>
<dbReference type="CCDS" id="CCDS17001.1">
    <molecule id="Q99M80-4"/>
</dbReference>
<dbReference type="CCDS" id="CCDS71182.1">
    <molecule id="Q99M80-2"/>
</dbReference>
<dbReference type="CCDS" id="CCDS71183.1">
    <molecule id="Q99M80-3"/>
</dbReference>
<dbReference type="RefSeq" id="NP_001278078.1">
    <molecule id="Q99M80-2"/>
    <property type="nucleotide sequence ID" value="NM_001291149.2"/>
</dbReference>
<dbReference type="RefSeq" id="NP_001278079.1">
    <molecule id="Q99M80-3"/>
    <property type="nucleotide sequence ID" value="NM_001291150.2"/>
</dbReference>
<dbReference type="RefSeq" id="NP_067439.1">
    <molecule id="Q99M80-4"/>
    <property type="nucleotide sequence ID" value="NM_021464.6"/>
</dbReference>
<dbReference type="RefSeq" id="XP_011237686.1">
    <molecule id="Q99M80-5"/>
    <property type="nucleotide sequence ID" value="XM_011239384.4"/>
</dbReference>
<dbReference type="SMR" id="Q99M80"/>
<dbReference type="FunCoup" id="Q99M80">
    <property type="interactions" value="171"/>
</dbReference>
<dbReference type="STRING" id="10090.ENSMUSP00000105067"/>
<dbReference type="GlyCosmos" id="Q99M80">
    <property type="glycosylation" value="10 sites, No reported glycans"/>
</dbReference>
<dbReference type="GlyGen" id="Q99M80">
    <property type="glycosylation" value="14 sites, 7 N-linked glycans (7 sites), 1 O-linked glycan (1 site)"/>
</dbReference>
<dbReference type="iPTMnet" id="Q99M80"/>
<dbReference type="PhosphoSitePlus" id="Q99M80"/>
<dbReference type="jPOST" id="Q99M80"/>
<dbReference type="PaxDb" id="10090-ENSMUSP00000105071"/>
<dbReference type="ProteomicsDB" id="302021">
    <molecule id="Q99M80-1"/>
</dbReference>
<dbReference type="ProteomicsDB" id="302022">
    <molecule id="Q99M80-2"/>
</dbReference>
<dbReference type="ProteomicsDB" id="302023">
    <molecule id="Q99M80-3"/>
</dbReference>
<dbReference type="ProteomicsDB" id="302024">
    <molecule id="Q99M80-4"/>
</dbReference>
<dbReference type="ProteomicsDB" id="302025">
    <molecule id="Q99M80-5"/>
</dbReference>
<dbReference type="Antibodypedia" id="2780">
    <property type="antibodies" value="112 antibodies from 32 providers"/>
</dbReference>
<dbReference type="DNASU" id="19281"/>
<dbReference type="Ensembl" id="ENSMUST00000109441.2">
    <molecule id="Q99M80-2"/>
    <property type="protein sequence ID" value="ENSMUSP00000105067.2"/>
    <property type="gene ID" value="ENSMUSG00000053141.17"/>
</dbReference>
<dbReference type="Ensembl" id="ENSMUST00000109443.8">
    <molecule id="Q99M80-3"/>
    <property type="protein sequence ID" value="ENSMUSP00000105069.2"/>
    <property type="gene ID" value="ENSMUSG00000053141.17"/>
</dbReference>
<dbReference type="Ensembl" id="ENSMUST00000109445.9">
    <molecule id="Q99M80-4"/>
    <property type="protein sequence ID" value="ENSMUSP00000105071.3"/>
    <property type="gene ID" value="ENSMUSG00000053141.17"/>
</dbReference>
<dbReference type="GeneID" id="19281"/>
<dbReference type="KEGG" id="mmu:19281"/>
<dbReference type="UCSC" id="uc008nrw.2">
    <molecule id="Q99M80-4"/>
    <property type="organism name" value="mouse"/>
</dbReference>
<dbReference type="UCSC" id="uc008nrx.2">
    <molecule id="Q99M80-3"/>
    <property type="organism name" value="mouse"/>
</dbReference>
<dbReference type="UCSC" id="uc008nrz.2">
    <molecule id="Q99M80-2"/>
    <property type="organism name" value="mouse"/>
</dbReference>
<dbReference type="AGR" id="MGI:1321152"/>
<dbReference type="CTD" id="11122"/>
<dbReference type="MGI" id="MGI:1321152">
    <property type="gene designation" value="Ptprt"/>
</dbReference>
<dbReference type="VEuPathDB" id="HostDB:ENSMUSG00000053141"/>
<dbReference type="eggNOG" id="KOG4228">
    <property type="taxonomic scope" value="Eukaryota"/>
</dbReference>
<dbReference type="GeneTree" id="ENSGT00940000155326"/>
<dbReference type="HOGENOM" id="CLU_001645_0_1_1"/>
<dbReference type="InParanoid" id="Q99M80"/>
<dbReference type="OMA" id="MPEYDTE"/>
<dbReference type="TreeFam" id="TF312900"/>
<dbReference type="BioGRID-ORCS" id="19281">
    <property type="hits" value="1 hit in 76 CRISPR screens"/>
</dbReference>
<dbReference type="CD-CODE" id="CE726F99">
    <property type="entry name" value="Postsynaptic density"/>
</dbReference>
<dbReference type="ChiTaRS" id="Ptprt">
    <property type="organism name" value="mouse"/>
</dbReference>
<dbReference type="PRO" id="PR:Q99M80"/>
<dbReference type="Proteomes" id="UP000000589">
    <property type="component" value="Chromosome 2"/>
</dbReference>
<dbReference type="RNAct" id="Q99M80">
    <property type="molecule type" value="protein"/>
</dbReference>
<dbReference type="Bgee" id="ENSMUSG00000053141">
    <property type="expression patterns" value="Expressed in piriform cortex and 116 other cell types or tissues"/>
</dbReference>
<dbReference type="ExpressionAtlas" id="Q99M80">
    <property type="expression patterns" value="baseline and differential"/>
</dbReference>
<dbReference type="GO" id="GO:0009986">
    <property type="term" value="C:cell surface"/>
    <property type="evidence" value="ECO:0007669"/>
    <property type="project" value="Ensembl"/>
</dbReference>
<dbReference type="GO" id="GO:0005886">
    <property type="term" value="C:plasma membrane"/>
    <property type="evidence" value="ECO:0000304"/>
    <property type="project" value="Reactome"/>
</dbReference>
<dbReference type="GO" id="GO:0051393">
    <property type="term" value="F:alpha-actinin binding"/>
    <property type="evidence" value="ECO:0000314"/>
    <property type="project" value="MGI"/>
</dbReference>
<dbReference type="GO" id="GO:0045294">
    <property type="term" value="F:alpha-catenin binding"/>
    <property type="evidence" value="ECO:0000314"/>
    <property type="project" value="MGI"/>
</dbReference>
<dbReference type="GO" id="GO:0008013">
    <property type="term" value="F:beta-catenin binding"/>
    <property type="evidence" value="ECO:0000314"/>
    <property type="project" value="MGI"/>
</dbReference>
<dbReference type="GO" id="GO:0045296">
    <property type="term" value="F:cadherin binding"/>
    <property type="evidence" value="ECO:0000353"/>
    <property type="project" value="MGI"/>
</dbReference>
<dbReference type="GO" id="GO:0070097">
    <property type="term" value="F:delta-catenin binding"/>
    <property type="evidence" value="ECO:0000353"/>
    <property type="project" value="MGI"/>
</dbReference>
<dbReference type="GO" id="GO:0045295">
    <property type="term" value="F:gamma-catenin binding"/>
    <property type="evidence" value="ECO:0000353"/>
    <property type="project" value="MGI"/>
</dbReference>
<dbReference type="GO" id="GO:0042803">
    <property type="term" value="F:protein homodimerization activity"/>
    <property type="evidence" value="ECO:0007669"/>
    <property type="project" value="Ensembl"/>
</dbReference>
<dbReference type="GO" id="GO:0019903">
    <property type="term" value="F:protein phosphatase binding"/>
    <property type="evidence" value="ECO:0007669"/>
    <property type="project" value="Ensembl"/>
</dbReference>
<dbReference type="GO" id="GO:0004725">
    <property type="term" value="F:protein tyrosine phosphatase activity"/>
    <property type="evidence" value="ECO:0000315"/>
    <property type="project" value="MGI"/>
</dbReference>
<dbReference type="GO" id="GO:0097677">
    <property type="term" value="F:STAT family protein binding"/>
    <property type="evidence" value="ECO:0007669"/>
    <property type="project" value="Ensembl"/>
</dbReference>
<dbReference type="GO" id="GO:0016790">
    <property type="term" value="F:thiolester hydrolase activity"/>
    <property type="evidence" value="ECO:0000314"/>
    <property type="project" value="MGI"/>
</dbReference>
<dbReference type="GO" id="GO:0005001">
    <property type="term" value="F:transmembrane receptor protein tyrosine phosphatase activity"/>
    <property type="evidence" value="ECO:0007669"/>
    <property type="project" value="Ensembl"/>
</dbReference>
<dbReference type="GO" id="GO:0007169">
    <property type="term" value="P:cell surface receptor protein tyrosine kinase signaling pathway"/>
    <property type="evidence" value="ECO:0007669"/>
    <property type="project" value="Ensembl"/>
</dbReference>
<dbReference type="GO" id="GO:0071354">
    <property type="term" value="P:cellular response to interleukin-6"/>
    <property type="evidence" value="ECO:0007669"/>
    <property type="project" value="Ensembl"/>
</dbReference>
<dbReference type="GO" id="GO:0007156">
    <property type="term" value="P:homophilic cell adhesion via plasma membrane adhesion molecules"/>
    <property type="evidence" value="ECO:0007669"/>
    <property type="project" value="Ensembl"/>
</dbReference>
<dbReference type="GO" id="GO:0030336">
    <property type="term" value="P:negative regulation of cell migration"/>
    <property type="evidence" value="ECO:0007669"/>
    <property type="project" value="Ensembl"/>
</dbReference>
<dbReference type="GO" id="GO:1904893">
    <property type="term" value="P:negative regulation of receptor signaling pathway via STAT"/>
    <property type="evidence" value="ECO:0007669"/>
    <property type="project" value="Ensembl"/>
</dbReference>
<dbReference type="CDD" id="cd00063">
    <property type="entry name" value="FN3"/>
    <property type="match status" value="3"/>
</dbReference>
<dbReference type="CDD" id="cd06263">
    <property type="entry name" value="MAM"/>
    <property type="match status" value="1"/>
</dbReference>
<dbReference type="CDD" id="cd14630">
    <property type="entry name" value="R-PTPc-T-1"/>
    <property type="match status" value="1"/>
</dbReference>
<dbReference type="CDD" id="cd14634">
    <property type="entry name" value="R-PTPc-T-2"/>
    <property type="match status" value="1"/>
</dbReference>
<dbReference type="FunFam" id="3.90.190.10:FF:000003">
    <property type="entry name" value="receptor-type tyrosine-protein phosphatase kappa isoform X1"/>
    <property type="match status" value="1"/>
</dbReference>
<dbReference type="FunFam" id="3.90.190.10:FF:000005">
    <property type="entry name" value="receptor-type tyrosine-protein phosphatase kappa isoform X1"/>
    <property type="match status" value="1"/>
</dbReference>
<dbReference type="FunFam" id="2.60.40.10:FF:000019">
    <property type="entry name" value="receptor-type tyrosine-protein phosphatase kappa isoform X2"/>
    <property type="match status" value="1"/>
</dbReference>
<dbReference type="FunFam" id="2.60.120.200:FF:000006">
    <property type="entry name" value="receptor-type tyrosine-protein phosphatase T isoform X1"/>
    <property type="match status" value="1"/>
</dbReference>
<dbReference type="FunFam" id="2.60.40.10:FF:000152">
    <property type="entry name" value="receptor-type tyrosine-protein phosphatase T isoform X1"/>
    <property type="match status" value="1"/>
</dbReference>
<dbReference type="FunFam" id="2.60.40.10:FF:000009">
    <property type="entry name" value="receptor-type tyrosine-protein phosphatase U isoform X1"/>
    <property type="match status" value="1"/>
</dbReference>
<dbReference type="FunFam" id="2.60.40.10:FF:000025">
    <property type="entry name" value="receptor-type tyrosine-protein phosphatase U isoform X2"/>
    <property type="match status" value="1"/>
</dbReference>
<dbReference type="Gene3D" id="2.60.120.200">
    <property type="match status" value="1"/>
</dbReference>
<dbReference type="Gene3D" id="2.60.40.10">
    <property type="entry name" value="Immunoglobulins"/>
    <property type="match status" value="4"/>
</dbReference>
<dbReference type="Gene3D" id="3.90.190.10">
    <property type="entry name" value="Protein tyrosine phosphatase superfamily"/>
    <property type="match status" value="2"/>
</dbReference>
<dbReference type="InterPro" id="IPR013320">
    <property type="entry name" value="ConA-like_dom_sf"/>
</dbReference>
<dbReference type="InterPro" id="IPR003961">
    <property type="entry name" value="FN3_dom"/>
</dbReference>
<dbReference type="InterPro" id="IPR036116">
    <property type="entry name" value="FN3_sf"/>
</dbReference>
<dbReference type="InterPro" id="IPR007110">
    <property type="entry name" value="Ig-like_dom"/>
</dbReference>
<dbReference type="InterPro" id="IPR036179">
    <property type="entry name" value="Ig-like_dom_sf"/>
</dbReference>
<dbReference type="InterPro" id="IPR013783">
    <property type="entry name" value="Ig-like_fold"/>
</dbReference>
<dbReference type="InterPro" id="IPR000998">
    <property type="entry name" value="MAM_dom"/>
</dbReference>
<dbReference type="InterPro" id="IPR029021">
    <property type="entry name" value="Prot-tyrosine_phosphatase-like"/>
</dbReference>
<dbReference type="InterPro" id="IPR000242">
    <property type="entry name" value="PTP_cat"/>
</dbReference>
<dbReference type="InterPro" id="IPR051622">
    <property type="entry name" value="R-tyr_protein_phosphatases"/>
</dbReference>
<dbReference type="InterPro" id="IPR016130">
    <property type="entry name" value="Tyr_Pase_AS"/>
</dbReference>
<dbReference type="InterPro" id="IPR003595">
    <property type="entry name" value="Tyr_Pase_cat"/>
</dbReference>
<dbReference type="InterPro" id="IPR000387">
    <property type="entry name" value="Tyr_Pase_dom"/>
</dbReference>
<dbReference type="PANTHER" id="PTHR24051:SF12">
    <property type="entry name" value="PROTEIN-TYROSINE-PHOSPHATASE"/>
    <property type="match status" value="1"/>
</dbReference>
<dbReference type="PANTHER" id="PTHR24051">
    <property type="entry name" value="SUSHI DOMAIN-CONTAINING PROTEIN 1"/>
    <property type="match status" value="1"/>
</dbReference>
<dbReference type="Pfam" id="PF00041">
    <property type="entry name" value="fn3"/>
    <property type="match status" value="1"/>
</dbReference>
<dbReference type="Pfam" id="PF23144">
    <property type="entry name" value="Fn3_PTPRU"/>
    <property type="match status" value="1"/>
</dbReference>
<dbReference type="Pfam" id="PF00629">
    <property type="entry name" value="MAM"/>
    <property type="match status" value="1"/>
</dbReference>
<dbReference type="Pfam" id="PF00102">
    <property type="entry name" value="Y_phosphatase"/>
    <property type="match status" value="2"/>
</dbReference>
<dbReference type="PRINTS" id="PR00020">
    <property type="entry name" value="MAMDOMAIN"/>
</dbReference>
<dbReference type="PRINTS" id="PR00700">
    <property type="entry name" value="PRTYPHPHTASE"/>
</dbReference>
<dbReference type="SMART" id="SM00060">
    <property type="entry name" value="FN3"/>
    <property type="match status" value="3"/>
</dbReference>
<dbReference type="SMART" id="SM00137">
    <property type="entry name" value="MAM"/>
    <property type="match status" value="1"/>
</dbReference>
<dbReference type="SMART" id="SM00194">
    <property type="entry name" value="PTPc"/>
    <property type="match status" value="2"/>
</dbReference>
<dbReference type="SMART" id="SM00404">
    <property type="entry name" value="PTPc_motif"/>
    <property type="match status" value="2"/>
</dbReference>
<dbReference type="SUPFAM" id="SSF52799">
    <property type="entry name" value="(Phosphotyrosine protein) phosphatases II"/>
    <property type="match status" value="2"/>
</dbReference>
<dbReference type="SUPFAM" id="SSF49899">
    <property type="entry name" value="Concanavalin A-like lectins/glucanases"/>
    <property type="match status" value="1"/>
</dbReference>
<dbReference type="SUPFAM" id="SSF49265">
    <property type="entry name" value="Fibronectin type III"/>
    <property type="match status" value="2"/>
</dbReference>
<dbReference type="SUPFAM" id="SSF48726">
    <property type="entry name" value="Immunoglobulin"/>
    <property type="match status" value="1"/>
</dbReference>
<dbReference type="PROSITE" id="PS50853">
    <property type="entry name" value="FN3"/>
    <property type="match status" value="3"/>
</dbReference>
<dbReference type="PROSITE" id="PS50835">
    <property type="entry name" value="IG_LIKE"/>
    <property type="match status" value="1"/>
</dbReference>
<dbReference type="PROSITE" id="PS00740">
    <property type="entry name" value="MAM_1"/>
    <property type="match status" value="1"/>
</dbReference>
<dbReference type="PROSITE" id="PS50060">
    <property type="entry name" value="MAM_2"/>
    <property type="match status" value="1"/>
</dbReference>
<dbReference type="PROSITE" id="PS00383">
    <property type="entry name" value="TYR_PHOSPHATASE_1"/>
    <property type="match status" value="2"/>
</dbReference>
<dbReference type="PROSITE" id="PS50056">
    <property type="entry name" value="TYR_PHOSPHATASE_2"/>
    <property type="match status" value="2"/>
</dbReference>
<dbReference type="PROSITE" id="PS50055">
    <property type="entry name" value="TYR_PHOSPHATASE_PTP"/>
    <property type="match status" value="2"/>
</dbReference>
<gene>
    <name type="primary">Ptprt</name>
</gene>
<comment type="function">
    <text>May be involved in both signal transduction and cellular adhesion in the CNS. May have specific signaling roles in the tyrosine phosphorylation/dephosphorylation pathway in the anterior compartment of the adult cerebellar cortex.</text>
</comment>
<comment type="catalytic activity">
    <reaction evidence="7">
        <text>O-phospho-L-tyrosyl-[protein] + H2O = L-tyrosyl-[protein] + phosphate</text>
        <dbReference type="Rhea" id="RHEA:10684"/>
        <dbReference type="Rhea" id="RHEA-COMP:10136"/>
        <dbReference type="Rhea" id="RHEA-COMP:20101"/>
        <dbReference type="ChEBI" id="CHEBI:15377"/>
        <dbReference type="ChEBI" id="CHEBI:43474"/>
        <dbReference type="ChEBI" id="CHEBI:46858"/>
        <dbReference type="ChEBI" id="CHEBI:61978"/>
        <dbReference type="EC" id="3.1.3.48"/>
    </reaction>
</comment>
<comment type="subcellular location">
    <subcellularLocation>
        <location>Membrane</location>
        <topology>Single-pass type I membrane protein</topology>
    </subcellularLocation>
</comment>
<comment type="alternative products">
    <event type="alternative splicing"/>
    <isoform>
        <id>Q99M80-1</id>
        <name>1</name>
        <sequence type="displayed"/>
    </isoform>
    <isoform>
        <id>Q99M80-2</id>
        <name>2</name>
        <sequence type="described" ref="VSP_007803 VSP_007806"/>
    </isoform>
    <isoform>
        <id>Q99M80-3</id>
        <name>3</name>
        <name>RPTPrho2</name>
        <sequence type="described" ref="VSP_007803 VSP_007804"/>
    </isoform>
    <isoform>
        <id>Q99M80-4</id>
        <name>4</name>
        <name>RPTPrho1</name>
        <sequence type="described" ref="VSP_007803"/>
    </isoform>
    <isoform>
        <id>Q99M80-5</id>
        <name>5</name>
        <sequence type="described" ref="VSP_007803 VSP_007805"/>
    </isoform>
</comment>
<comment type="tissue specificity">
    <text evidence="9">Expression is restricted to the CNS. Distributed throughout the brain and spinal cord.</text>
</comment>
<comment type="developmental stage">
    <text>Exceptionally high levels found in the cortex and olfactory bulbs during perinatal development and are down-regulated during postnatal week 2. Expression in the cerebellar cortex is restricted to the granule cell layer of lobules 1-6. Anterior and posterior compartments become discernible only during postnatal weeks 2 and 6.</text>
</comment>
<comment type="similarity">
    <text evidence="13">Belongs to the protein-tyrosine phosphatase family. Receptor class 2B subfamily.</text>
</comment>
<accession>Q99M80</accession>
<accession>Q99M81</accession>
<accession>Q99M82</accession>
<accession>Q9JIZ1</accession>
<accession>Q9JIZ2</accession>
<accession>Q9JKC2</accession>
<accession>Q9JLP0</accession>
<organism>
    <name type="scientific">Mus musculus</name>
    <name type="common">Mouse</name>
    <dbReference type="NCBI Taxonomy" id="10090"/>
    <lineage>
        <taxon>Eukaryota</taxon>
        <taxon>Metazoa</taxon>
        <taxon>Chordata</taxon>
        <taxon>Craniata</taxon>
        <taxon>Vertebrata</taxon>
        <taxon>Euteleostomi</taxon>
        <taxon>Mammalia</taxon>
        <taxon>Eutheria</taxon>
        <taxon>Euarchontoglires</taxon>
        <taxon>Glires</taxon>
        <taxon>Rodentia</taxon>
        <taxon>Myomorpha</taxon>
        <taxon>Muroidea</taxon>
        <taxon>Muridae</taxon>
        <taxon>Murinae</taxon>
        <taxon>Mus</taxon>
        <taxon>Mus</taxon>
    </lineage>
</organism>
<sequence>MGSLGGLALCLLRLLLLGLQRPPLPGAGAQSAAGGCSFDEHYSNCGYSVALGTNGFTWEQINTWEKPMLDPAVPTGSFMMVNSSGRASGQKAHLLLPTLKENDTHCIDFHYYFSSRDRSSPGALNVYVKVNGGPQGNPVWNVSGVVTEGWVKAELAISTFWPHFYQVIFESVSLKGHPGYIAVDEVRVLAHPCRKAPHFLRLQNVEVNVGQNATFQCIAGGKWSQHDKLWLQQWNGRDTALMVTRVVNHRRFSATVSVADTSQRSISKYRCVIRSDGGSGVSNYAELIVKEPPTPIAPPELLAVGATYLWIKPNANSIIGDGPIILKEVEYRTTTGTWAETHIVDSPNYKLWHLDPDVEYEIRVLLTRPGEGGTGPPGPPLTTRTKCADPVHGPQNVEIVDIRARQLTLQWEPFGYAVTRCHSYNLTVQYQYVFNQQQYEAEEVIQTSSHYTLRGLRPFMTIRLRLLLSNPEGRMESEELVVQTEEDVPGAVPLESIQGGPFEEKIYIQWKPPNETNGVITLYEINYKAVGSLDPSADLSSQRGKVFKLRNETHHLFVGLYPGTTYSFTIKASTAKGFGPPVTTRIATKISAPSMPEYDADTPLNETDTTITVMLKPAQSRGAPVSVYQLVVKEERLQKSRRAADIIECFSVPVSYRNASNLDSLHYFAAELKPSNLPVTQPFTVGDNKTYNGYWNPPLSPLKSYSIYFQALSKANGETKINCVRLATKGAPMGSAQVTPGTPLCLLTTASTQNSNTVEPEKQVDNTVKMAGVIAGLLMFIIILLGVMLTIKRRKLAKKQKETQSGAQREMGPVASTDKPTAKLGTNRNDEGFSSSSQDVNGFTDGSRGELSQPTLTIQTHPYRTCDPVEMSYPRDQFQPAIRVADLLQHITQMKRGQGYGFKEEYEALPEGQTASWDTAKEDENRNKNRYGNIISYDHSRVRLLVLDGDPHSDYINANYIDGYHRPRHYIATQGPMQETVKDFWRMIWQENSASIVMVTNLVEVGRVKCVRYWPDDTEVYGDIKVTLIETEPLAEYVIRTFTVQKKGYHEIRELRLFHFTSWPDHGVPCYATGLLGFVRQVKFLNPPEAGPIVVHCSAGAGRTGCFIAIDTMLDMAENEGVVDIFNCVRELRAQRVNLVQTEEQYVFVHDAILEACLCGNTAIPVCEFRSLYYNISRLDPQTNSSQIKDEFQTLNIVTPRVRPEDCSIGLLPRNHDKNRSMDVLPLDRCLPFLISVDGESSNYINAALMDSHKQPAAFVVTQHPLPNTVADFWRLVFDYNCSSVVMLNEMDTAQLCMQYWPEKTSGCYGPIQVEFVSADIDEDIIHRIFRICNMARPQDGYRIVQHLQYIGWPAYRDTPPSKRSLLKVVRRLEKWQEQYDGREGRTVVHCLNGGGRSGTFCAICSVCEMIQQQNIIDVFHIVKTLRNNKSNMVETLEQYKFVYEVALEYLSSF</sequence>
<feature type="signal peptide" evidence="2">
    <location>
        <begin position="1"/>
        <end position="29"/>
    </location>
</feature>
<feature type="chain" id="PRO_0000025464" description="Receptor-type tyrosine-protein phosphatase T">
    <location>
        <begin position="30"/>
        <end position="1454"/>
    </location>
</feature>
<feature type="topological domain" description="Extracellular" evidence="2">
    <location>
        <begin position="30"/>
        <end position="770"/>
    </location>
</feature>
<feature type="transmembrane region" description="Helical" evidence="2">
    <location>
        <begin position="771"/>
        <end position="791"/>
    </location>
</feature>
<feature type="topological domain" description="Cytoplasmic" evidence="2">
    <location>
        <begin position="792"/>
        <end position="1454"/>
    </location>
</feature>
<feature type="domain" description="MAM" evidence="4">
    <location>
        <begin position="34"/>
        <end position="195"/>
    </location>
</feature>
<feature type="domain" description="Ig-like C2-type">
    <location>
        <begin position="197"/>
        <end position="288"/>
    </location>
</feature>
<feature type="domain" description="Fibronectin type-III 1" evidence="6">
    <location>
        <begin position="295"/>
        <end position="388"/>
    </location>
</feature>
<feature type="domain" description="Fibronectin type-III 2" evidence="6">
    <location>
        <begin position="393"/>
        <end position="487"/>
    </location>
</feature>
<feature type="domain" description="Fibronectin type-III 3" evidence="6">
    <location>
        <begin position="488"/>
        <end position="594"/>
    </location>
</feature>
<feature type="domain" description="Fibronectin type-III 4" evidence="6">
    <location>
        <begin position="670"/>
        <end position="767"/>
    </location>
</feature>
<feature type="domain" description="Tyrosine-protein phosphatase 1" evidence="5">
    <location>
        <begin position="902"/>
        <end position="1156"/>
    </location>
</feature>
<feature type="domain" description="Tyrosine-protein phosphatase 2" evidence="5">
    <location>
        <begin position="1188"/>
        <end position="1450"/>
    </location>
</feature>
<feature type="region of interest" description="Disordered" evidence="8">
    <location>
        <begin position="800"/>
        <end position="852"/>
    </location>
</feature>
<feature type="compositionally biased region" description="Polar residues" evidence="8">
    <location>
        <begin position="824"/>
        <end position="841"/>
    </location>
</feature>
<feature type="active site" description="Phosphocysteine intermediate" evidence="1">
    <location>
        <position position="1097"/>
    </location>
</feature>
<feature type="active site" description="Phosphocysteine intermediate" evidence="1">
    <location>
        <position position="1391"/>
    </location>
</feature>
<feature type="binding site" evidence="1">
    <location>
        <position position="1065"/>
    </location>
    <ligand>
        <name>substrate</name>
    </ligand>
</feature>
<feature type="binding site" evidence="1">
    <location>
        <begin position="1097"/>
        <end position="1103"/>
    </location>
    <ligand>
        <name>substrate</name>
    </ligand>
</feature>
<feature type="binding site" evidence="1">
    <location>
        <position position="1141"/>
    </location>
    <ligand>
        <name>substrate</name>
    </ligand>
</feature>
<feature type="modified residue" description="Phosphoserine" evidence="14">
    <location>
        <position position="1221"/>
    </location>
</feature>
<feature type="glycosylation site" description="N-linked (GlcNAc...) asparagine" evidence="2">
    <location>
        <position position="82"/>
    </location>
</feature>
<feature type="glycosylation site" description="N-linked (GlcNAc...) asparagine" evidence="2">
    <location>
        <position position="102"/>
    </location>
</feature>
<feature type="glycosylation site" description="N-linked (GlcNAc...) asparagine" evidence="2">
    <location>
        <position position="141"/>
    </location>
</feature>
<feature type="glycosylation site" description="N-linked (GlcNAc...) asparagine" evidence="2">
    <location>
        <position position="212"/>
    </location>
</feature>
<feature type="glycosylation site" description="N-linked (GlcNAc...) asparagine" evidence="2">
    <location>
        <position position="425"/>
    </location>
</feature>
<feature type="glycosylation site" description="N-linked (GlcNAc...) asparagine" evidence="2">
    <location>
        <position position="514"/>
    </location>
</feature>
<feature type="glycosylation site" description="N-linked (GlcNAc...) asparagine" evidence="2">
    <location>
        <position position="551"/>
    </location>
</feature>
<feature type="glycosylation site" description="N-linked (GlcNAc...) asparagine" evidence="2">
    <location>
        <position position="605"/>
    </location>
</feature>
<feature type="glycosylation site" description="N-linked (GlcNAc...) asparagine" evidence="2">
    <location>
        <position position="658"/>
    </location>
</feature>
<feature type="glycosylation site" description="N-linked (GlcNAc...) asparagine" evidence="2">
    <location>
        <position position="688"/>
    </location>
</feature>
<feature type="disulfide bond" evidence="3">
    <location>
        <begin position="217"/>
        <end position="271"/>
    </location>
</feature>
<feature type="splice variant" id="VSP_007803" description="In isoform 2, isoform 3, isoform 4 and isoform 5." evidence="10 11 12">
    <location>
        <begin position="731"/>
        <end position="749"/>
    </location>
</feature>
<feature type="splice variant" id="VSP_007804" description="In isoform 3." evidence="11 12">
    <original>R</original>
    <variation>RRNAYSYSYYL</variation>
    <location>
        <position position="794"/>
    </location>
</feature>
<feature type="splice variant" id="VSP_007805" description="In isoform 5." evidence="10">
    <original>R</original>
    <variation>RRNAYSYSYYLSQR</variation>
    <location>
        <position position="794"/>
    </location>
</feature>
<feature type="splice variant" id="VSP_007806" description="In isoform 2." evidence="10 11">
    <original>R</original>
    <variation>RHPAEHTVGTATLGRAASPGM</variation>
    <location>
        <position position="1007"/>
    </location>
</feature>
<feature type="sequence conflict" description="In Ref. 1; AAD34158." evidence="13" ref="1">
    <location>
        <begin position="13"/>
        <end position="16"/>
    </location>
</feature>
<feature type="sequence conflict" description="In Ref. 1; AAD34158." evidence="13" ref="1">
    <original>R</original>
    <variation>P</variation>
    <location>
        <position position="21"/>
    </location>
</feature>
<feature type="sequence conflict" description="In Ref. 1; AAD34158." evidence="13" ref="1">
    <original>GGCS</original>
    <variation>RGVF</variation>
    <location>
        <begin position="34"/>
        <end position="37"/>
    </location>
</feature>
<feature type="sequence conflict" description="In Ref. 4; AAF82401." evidence="13" ref="4">
    <original>A</original>
    <variation>T</variation>
    <location>
        <position position="87"/>
    </location>
</feature>
<feature type="sequence conflict" description="In Ref. 4; AAF82401." evidence="13" ref="4">
    <original>A</original>
    <variation>S</variation>
    <location>
        <position position="254"/>
    </location>
</feature>
<feature type="sequence conflict" description="In Ref. 4; AAF82401." evidence="13" ref="4">
    <original>I</original>
    <variation>V</variation>
    <location>
        <position position="266"/>
    </location>
</feature>
<feature type="sequence conflict" description="In Ref. 4; AAF82401." evidence="13" ref="4">
    <original>T</original>
    <variation>S</variation>
    <location>
        <position position="602"/>
    </location>
</feature>
<feature type="sequence conflict" description="In Ref. 4; AAF82401." evidence="13" ref="4">
    <original>A</original>
    <variation>T</variation>
    <location>
        <position position="822"/>
    </location>
</feature>
<feature type="sequence conflict" description="In Ref. 4; AAF82401." evidence="13" ref="4">
    <original>G</original>
    <variation>S</variation>
    <location>
        <position position="825"/>
    </location>
</feature>
<feature type="sequence conflict" description="In Ref. 4; AAF82401." evidence="13" ref="4">
    <original>TD</original>
    <variation>N</variation>
    <location>
        <begin position="844"/>
        <end position="845"/>
    </location>
</feature>
<feature type="sequence conflict" description="In Ref. 4; AAF82401." evidence="13" ref="4">
    <original>D</original>
    <variation>A</variation>
    <location>
        <position position="1016"/>
    </location>
</feature>
<feature type="sequence conflict" description="In Ref. 1; AAD34158." evidence="13" ref="1">
    <original>Y</original>
    <variation>H</variation>
    <location>
        <position position="1049"/>
    </location>
</feature>
<feature type="sequence conflict" description="In Ref. 4; AAF82401." evidence="13" ref="4">
    <original>H</original>
    <variation>N</variation>
    <location>
        <position position="1050"/>
    </location>
</feature>
<feature type="sequence conflict" description="In Ref. 4; AAF82401." evidence="13" ref="4">
    <original>L</original>
    <variation>V</variation>
    <location>
        <position position="1076"/>
    </location>
</feature>
<feature type="sequence conflict" description="In Ref. 1; AAD34158." evidence="13" ref="1">
    <original>R</original>
    <variation>K</variation>
    <location>
        <position position="1103"/>
    </location>
</feature>
<feature type="sequence conflict" description="In Ref. 4; AAF82401." evidence="13" ref="4">
    <original>F</original>
    <variation>L</variation>
    <location>
        <position position="1259"/>
    </location>
</feature>
<feature type="sequence conflict" description="In Ref. 4; AAF82401." evidence="13" ref="4">
    <original>L</original>
    <variation>I</variation>
    <location>
        <position position="1266"/>
    </location>
</feature>
<feature type="sequence conflict" description="In Ref. 4; AAF82401." evidence="13" ref="4">
    <original>T</original>
    <variation>S</variation>
    <location>
        <position position="1269"/>
    </location>
</feature>
<evidence type="ECO:0000250" key="1"/>
<evidence type="ECO:0000255" key="2"/>
<evidence type="ECO:0000255" key="3">
    <source>
        <dbReference type="PROSITE-ProRule" id="PRU00114"/>
    </source>
</evidence>
<evidence type="ECO:0000255" key="4">
    <source>
        <dbReference type="PROSITE-ProRule" id="PRU00128"/>
    </source>
</evidence>
<evidence type="ECO:0000255" key="5">
    <source>
        <dbReference type="PROSITE-ProRule" id="PRU00160"/>
    </source>
</evidence>
<evidence type="ECO:0000255" key="6">
    <source>
        <dbReference type="PROSITE-ProRule" id="PRU00316"/>
    </source>
</evidence>
<evidence type="ECO:0000255" key="7">
    <source>
        <dbReference type="PROSITE-ProRule" id="PRU10044"/>
    </source>
</evidence>
<evidence type="ECO:0000256" key="8">
    <source>
        <dbReference type="SAM" id="MobiDB-lite"/>
    </source>
</evidence>
<evidence type="ECO:0000269" key="9">
    <source>
    </source>
</evidence>
<evidence type="ECO:0000303" key="10">
    <source>
    </source>
</evidence>
<evidence type="ECO:0000303" key="11">
    <source ref="3"/>
</evidence>
<evidence type="ECO:0000303" key="12">
    <source ref="4"/>
</evidence>
<evidence type="ECO:0000305" key="13"/>
<evidence type="ECO:0007744" key="14">
    <source>
    </source>
</evidence>
<proteinExistence type="evidence at protein level"/>